<reference key="1">
    <citation type="journal article" date="1997" name="Nature">
        <title>The nucleotide sequence of Saccharomyces cerevisiae chromosome XIII.</title>
        <authorList>
            <person name="Bowman S."/>
            <person name="Churcher C.M."/>
            <person name="Badcock K."/>
            <person name="Brown D."/>
            <person name="Chillingworth T."/>
            <person name="Connor R."/>
            <person name="Dedman K."/>
            <person name="Devlin K."/>
            <person name="Gentles S."/>
            <person name="Hamlin N."/>
            <person name="Hunt S."/>
            <person name="Jagels K."/>
            <person name="Lye G."/>
            <person name="Moule S."/>
            <person name="Odell C."/>
            <person name="Pearson D."/>
            <person name="Rajandream M.A."/>
            <person name="Rice P."/>
            <person name="Skelton J."/>
            <person name="Walsh S.V."/>
            <person name="Whitehead S."/>
            <person name="Barrell B.G."/>
        </authorList>
    </citation>
    <scope>NUCLEOTIDE SEQUENCE [LARGE SCALE GENOMIC DNA]</scope>
    <source>
        <strain>ATCC 204508 / S288c</strain>
    </source>
</reference>
<reference key="2">
    <citation type="journal article" date="2014" name="G3 (Bethesda)">
        <title>The reference genome sequence of Saccharomyces cerevisiae: Then and now.</title>
        <authorList>
            <person name="Engel S.R."/>
            <person name="Dietrich F.S."/>
            <person name="Fisk D.G."/>
            <person name="Binkley G."/>
            <person name="Balakrishnan R."/>
            <person name="Costanzo M.C."/>
            <person name="Dwight S.S."/>
            <person name="Hitz B.C."/>
            <person name="Karra K."/>
            <person name="Nash R.S."/>
            <person name="Weng S."/>
            <person name="Wong E.D."/>
            <person name="Lloyd P."/>
            <person name="Skrzypek M.S."/>
            <person name="Miyasato S.R."/>
            <person name="Simison M."/>
            <person name="Cherry J.M."/>
        </authorList>
    </citation>
    <scope>GENOME REANNOTATION</scope>
    <source>
        <strain>ATCC 204508 / S288c</strain>
    </source>
</reference>
<reference key="3">
    <citation type="journal article" date="2007" name="Genome Res.">
        <title>Approaching a complete repository of sequence-verified protein-encoding clones for Saccharomyces cerevisiae.</title>
        <authorList>
            <person name="Hu Y."/>
            <person name="Rolfs A."/>
            <person name="Bhullar B."/>
            <person name="Murthy T.V.S."/>
            <person name="Zhu C."/>
            <person name="Berger M.F."/>
            <person name="Camargo A.A."/>
            <person name="Kelley F."/>
            <person name="McCarron S."/>
            <person name="Jepson D."/>
            <person name="Richardson A."/>
            <person name="Raphael J."/>
            <person name="Moreira D."/>
            <person name="Taycher E."/>
            <person name="Zuo D."/>
            <person name="Mohr S."/>
            <person name="Kane M.F."/>
            <person name="Williamson J."/>
            <person name="Simpson A.J.G."/>
            <person name="Bulyk M.L."/>
            <person name="Harlow E."/>
            <person name="Marsischky G."/>
            <person name="Kolodner R.D."/>
            <person name="LaBaer J."/>
        </authorList>
    </citation>
    <scope>NUCLEOTIDE SEQUENCE [GENOMIC DNA]</scope>
    <source>
        <strain>ATCC 204508 / S288c</strain>
    </source>
</reference>
<reference key="4">
    <citation type="journal article" date="2003" name="J. Cell Sci.">
        <title>Differential requirements of novel A1PiZ degradation deficient (ADD) genes in ER-associated protein degradation.</title>
        <authorList>
            <person name="Palmer E.A."/>
            <person name="Kruse K.B."/>
            <person name="Fewell S.W."/>
            <person name="Buchanan S.M."/>
            <person name="Brodsky J.L."/>
            <person name="McCracken A.A."/>
        </authorList>
    </citation>
    <scope>FUNCTION</scope>
</reference>
<reference key="5">
    <citation type="journal article" date="2003" name="Nature">
        <title>Global analysis of protein localization in budding yeast.</title>
        <authorList>
            <person name="Huh W.-K."/>
            <person name="Falvo J.V."/>
            <person name="Gerke L.C."/>
            <person name="Carroll A.S."/>
            <person name="Howson R.W."/>
            <person name="Weissman J.S."/>
            <person name="O'Shea E.K."/>
        </authorList>
    </citation>
    <scope>SUBCELLULAR LOCATION [LARGE SCALE ANALYSIS]</scope>
</reference>
<reference key="6">
    <citation type="journal article" date="2003" name="Nature">
        <title>Global analysis of protein expression in yeast.</title>
        <authorList>
            <person name="Ghaemmaghami S."/>
            <person name="Huh W.-K."/>
            <person name="Bower K."/>
            <person name="Howson R.W."/>
            <person name="Belle A."/>
            <person name="Dephoure N."/>
            <person name="O'Shea E.K."/>
            <person name="Weissman J.S."/>
        </authorList>
    </citation>
    <scope>LEVEL OF PROTEIN EXPRESSION [LARGE SCALE ANALYSIS]</scope>
</reference>
<reference key="7">
    <citation type="journal article" date="2007" name="J. Proteome Res.">
        <title>Large-scale phosphorylation analysis of alpha-factor-arrested Saccharomyces cerevisiae.</title>
        <authorList>
            <person name="Li X."/>
            <person name="Gerber S.A."/>
            <person name="Rudner A.D."/>
            <person name="Beausoleil S.A."/>
            <person name="Haas W."/>
            <person name="Villen J."/>
            <person name="Elias J.E."/>
            <person name="Gygi S.P."/>
        </authorList>
    </citation>
    <scope>PHOSPHORYLATION [LARGE SCALE ANALYSIS] AT SER-79</scope>
    <scope>IDENTIFICATION BY MASS SPECTROMETRY [LARGE SCALE ANALYSIS]</scope>
    <source>
        <strain>ADR376</strain>
    </source>
</reference>
<reference key="8">
    <citation type="journal article" date="2007" name="Yeast">
        <title>Global protein expression profiling of budding yeast in response to DNA damage.</title>
        <authorList>
            <person name="Lee M.-W."/>
            <person name="Kim B.-J."/>
            <person name="Choi H.-K."/>
            <person name="Ryu M.-J."/>
            <person name="Kim S.-B."/>
            <person name="Kang K.-M."/>
            <person name="Cho E.-J."/>
            <person name="Youn H.-D."/>
            <person name="Huh W.-K."/>
            <person name="Kim S.-T."/>
        </authorList>
    </citation>
    <scope>INDUCTION</scope>
</reference>
<reference key="9">
    <citation type="journal article" date="2008" name="Mol. Cell. Proteomics">
        <title>A multidimensional chromatography technology for in-depth phosphoproteome analysis.</title>
        <authorList>
            <person name="Albuquerque C.P."/>
            <person name="Smolka M.B."/>
            <person name="Payne S.H."/>
            <person name="Bafna V."/>
            <person name="Eng J."/>
            <person name="Zhou H."/>
        </authorList>
    </citation>
    <scope>IDENTIFICATION BY MASS SPECTROMETRY [LARGE SCALE ANALYSIS]</scope>
</reference>
<reference key="10">
    <citation type="journal article" date="2009" name="Science">
        <title>Global analysis of Cdk1 substrate phosphorylation sites provides insights into evolution.</title>
        <authorList>
            <person name="Holt L.J."/>
            <person name="Tuch B.B."/>
            <person name="Villen J."/>
            <person name="Johnson A.D."/>
            <person name="Gygi S.P."/>
            <person name="Morgan D.O."/>
        </authorList>
    </citation>
    <scope>PHOSPHORYLATION [LARGE SCALE ANALYSIS] AT SER-79</scope>
    <scope>IDENTIFICATION BY MASS SPECTROMETRY [LARGE SCALE ANALYSIS]</scope>
</reference>
<sequence length="198" mass="22110">MAIKPTKSFQNCLEAEVPGYNDCPTVLFSIDPNSGPRSKSKQRTKSKRCVSGRLATEVLDLYGNTKTATTPPPVLRRPSVTAAQQESACEGVLVKDQGDRQLQPILCSKEELVAKINDLCVCGSKLSSKELEFYKKKLDSNITKILQNEHTKTVLSQIFNEKDKNMAVKTIKHWMVTDTTISNWCPAFLKIFENAMPN</sequence>
<name>ADD37_YEAST</name>
<protein>
    <recommendedName>
        <fullName>Alpha1-proteinase inhibitor-degradation deficient protein 37</fullName>
    </recommendedName>
</protein>
<feature type="chain" id="PRO_0000203321" description="Alpha1-proteinase inhibitor-degradation deficient protein 37">
    <location>
        <begin position="1"/>
        <end position="198"/>
    </location>
</feature>
<feature type="modified residue" description="Phosphoserine" evidence="5 6">
    <location>
        <position position="79"/>
    </location>
</feature>
<gene>
    <name type="primary">ADD37</name>
    <name type="ordered locus">YMR184W</name>
    <name type="ORF">YM8010.14</name>
</gene>
<dbReference type="EMBL" id="Z49808">
    <property type="protein sequence ID" value="CAA89917.1"/>
    <property type="molecule type" value="Genomic_DNA"/>
</dbReference>
<dbReference type="EMBL" id="AY557970">
    <property type="protein sequence ID" value="AAS56296.1"/>
    <property type="molecule type" value="Genomic_DNA"/>
</dbReference>
<dbReference type="EMBL" id="BK006946">
    <property type="protein sequence ID" value="DAA10082.1"/>
    <property type="molecule type" value="Genomic_DNA"/>
</dbReference>
<dbReference type="PIR" id="S55131">
    <property type="entry name" value="S55131"/>
</dbReference>
<dbReference type="RefSeq" id="NP_013909.1">
    <property type="nucleotide sequence ID" value="NM_001182690.1"/>
</dbReference>
<dbReference type="BioGRID" id="35362">
    <property type="interactions" value="69"/>
</dbReference>
<dbReference type="DIP" id="DIP-3848N"/>
<dbReference type="FunCoup" id="Q03233">
    <property type="interactions" value="56"/>
</dbReference>
<dbReference type="IntAct" id="Q03233">
    <property type="interactions" value="6"/>
</dbReference>
<dbReference type="MINT" id="Q03233"/>
<dbReference type="STRING" id="4932.YMR184W"/>
<dbReference type="iPTMnet" id="Q03233"/>
<dbReference type="PaxDb" id="4932-YMR184W"/>
<dbReference type="PeptideAtlas" id="Q03233"/>
<dbReference type="EnsemblFungi" id="YMR184W_mRNA">
    <property type="protein sequence ID" value="YMR184W"/>
    <property type="gene ID" value="YMR184W"/>
</dbReference>
<dbReference type="GeneID" id="855222"/>
<dbReference type="KEGG" id="sce:YMR184W"/>
<dbReference type="AGR" id="SGD:S000004796"/>
<dbReference type="SGD" id="S000004796">
    <property type="gene designation" value="ADD37"/>
</dbReference>
<dbReference type="VEuPathDB" id="FungiDB:YMR184W"/>
<dbReference type="eggNOG" id="ENOG502S4DB">
    <property type="taxonomic scope" value="Eukaryota"/>
</dbReference>
<dbReference type="HOGENOM" id="CLU_1496199_0_0_1"/>
<dbReference type="InParanoid" id="Q03233"/>
<dbReference type="OMA" id="PGYNDCP"/>
<dbReference type="OrthoDB" id="4090463at2759"/>
<dbReference type="BioCyc" id="YEAST:G3O-32872-MONOMER"/>
<dbReference type="BioGRID-ORCS" id="855222">
    <property type="hits" value="0 hits in 10 CRISPR screens"/>
</dbReference>
<dbReference type="PRO" id="PR:Q03233"/>
<dbReference type="Proteomes" id="UP000002311">
    <property type="component" value="Chromosome XIII"/>
</dbReference>
<dbReference type="RNAct" id="Q03233">
    <property type="molecule type" value="protein"/>
</dbReference>
<dbReference type="GO" id="GO:0005737">
    <property type="term" value="C:cytoplasm"/>
    <property type="evidence" value="ECO:0007005"/>
    <property type="project" value="SGD"/>
</dbReference>
<dbReference type="GO" id="GO:0036503">
    <property type="term" value="P:ERAD pathway"/>
    <property type="evidence" value="ECO:0000315"/>
    <property type="project" value="SGD"/>
</dbReference>
<keyword id="KW-0963">Cytoplasm</keyword>
<keyword id="KW-0597">Phosphoprotein</keyword>
<keyword id="KW-1185">Reference proteome</keyword>
<organism>
    <name type="scientific">Saccharomyces cerevisiae (strain ATCC 204508 / S288c)</name>
    <name type="common">Baker's yeast</name>
    <dbReference type="NCBI Taxonomy" id="559292"/>
    <lineage>
        <taxon>Eukaryota</taxon>
        <taxon>Fungi</taxon>
        <taxon>Dikarya</taxon>
        <taxon>Ascomycota</taxon>
        <taxon>Saccharomycotina</taxon>
        <taxon>Saccharomycetes</taxon>
        <taxon>Saccharomycetales</taxon>
        <taxon>Saccharomycetaceae</taxon>
        <taxon>Saccharomyces</taxon>
    </lineage>
</organism>
<comment type="function">
    <text evidence="1">Involved in ER-associated protein degradation (ERAD).</text>
</comment>
<comment type="subcellular location">
    <subcellularLocation>
        <location evidence="2">Cytoplasm</location>
    </subcellularLocation>
</comment>
<comment type="induction">
    <text evidence="4">In response to the DNA-damaging agent MMS.</text>
</comment>
<comment type="miscellaneous">
    <text evidence="3">Present with 1270 molecules/cell in log phase SD medium.</text>
</comment>
<proteinExistence type="evidence at protein level"/>
<evidence type="ECO:0000269" key="1">
    <source>
    </source>
</evidence>
<evidence type="ECO:0000269" key="2">
    <source>
    </source>
</evidence>
<evidence type="ECO:0000269" key="3">
    <source>
    </source>
</evidence>
<evidence type="ECO:0000269" key="4">
    <source>
    </source>
</evidence>
<evidence type="ECO:0007744" key="5">
    <source>
    </source>
</evidence>
<evidence type="ECO:0007744" key="6">
    <source>
    </source>
</evidence>
<accession>Q03233</accession>
<accession>D6W008</accession>